<proteinExistence type="evidence at protein level"/>
<comment type="function">
    <text>Component of the U4/U5/U6 snRNP, binding principally to the u5 snRNP. It is not absolutely required for the second step of pre-mRNA splicing at low temperatures but is required at higher temperatures. It may stabilize a particular conformation of the U5 snRNP or orient the U5 snRNP within the U4/U5/U6 snRNP or within the spliceosome.</text>
</comment>
<comment type="subunit">
    <text evidence="2">Homodimer. Component of the U4/U6-U5 tri-snRNP complex composed of the U4, U6 and U5 snRNAs and at least PRP3, PRP4, PRP6, PRP8, PRP18, PRP31, PRP38, SNU13, SNU23, SNU66, SNU114, SPP381, SMB1, SMD1, SMD2, SMD3, SMX2, SMX3, LSM2, LSM3, LSM4, LSM5, LSM6, LSM7, LSM8, BRR2 and DIB1.</text>
</comment>
<comment type="subcellular location">
    <subcellularLocation>
        <location>Nucleus</location>
    </subcellularLocation>
</comment>
<comment type="similarity">
    <text evidence="3">Belongs to the PRP18 family.</text>
</comment>
<dbReference type="EMBL" id="L03536">
    <property type="protein sequence ID" value="AAA34915.1"/>
    <property type="molecule type" value="Genomic_DNA"/>
</dbReference>
<dbReference type="EMBL" id="U13016">
    <property type="protein sequence ID" value="AAA61643.1"/>
    <property type="molecule type" value="Genomic_DNA"/>
</dbReference>
<dbReference type="EMBL" id="Z72791">
    <property type="protein sequence ID" value="CAA96989.1"/>
    <property type="molecule type" value="Genomic_DNA"/>
</dbReference>
<dbReference type="EMBL" id="D50644">
    <property type="protein sequence ID" value="BAA09309.1"/>
    <property type="molecule type" value="Genomic_DNA"/>
</dbReference>
<dbReference type="EMBL" id="BK006941">
    <property type="protein sequence ID" value="DAA08104.1"/>
    <property type="molecule type" value="Genomic_DNA"/>
</dbReference>
<dbReference type="PIR" id="S64295">
    <property type="entry name" value="S64295"/>
</dbReference>
<dbReference type="RefSeq" id="NP_011520.2">
    <property type="nucleotide sequence ID" value="NM_001181135.1"/>
</dbReference>
<dbReference type="PDB" id="1DVK">
    <property type="method" value="X-ray"/>
    <property type="resolution" value="2.15 A"/>
    <property type="chains" value="A/B=79-251"/>
</dbReference>
<dbReference type="PDB" id="5MPS">
    <property type="method" value="EM"/>
    <property type="resolution" value="3.85 A"/>
    <property type="chains" value="a=1-251"/>
</dbReference>
<dbReference type="PDB" id="5MQ0">
    <property type="method" value="EM"/>
    <property type="resolution" value="4.17 A"/>
    <property type="chains" value="a=1-251"/>
</dbReference>
<dbReference type="PDB" id="5WSG">
    <property type="method" value="EM"/>
    <property type="resolution" value="4.00 A"/>
    <property type="chains" value="f=1-251"/>
</dbReference>
<dbReference type="PDB" id="5YLZ">
    <property type="method" value="EM"/>
    <property type="resolution" value="3.60 A"/>
    <property type="chains" value="U=1-251"/>
</dbReference>
<dbReference type="PDB" id="6BK8">
    <property type="method" value="EM"/>
    <property type="resolution" value="3.30 A"/>
    <property type="chains" value="N=1-251"/>
</dbReference>
<dbReference type="PDB" id="6EXN">
    <property type="method" value="EM"/>
    <property type="resolution" value="3.70 A"/>
    <property type="chains" value="a=1-251"/>
</dbReference>
<dbReference type="PDB" id="9DTR">
    <property type="method" value="EM"/>
    <property type="resolution" value="2.31 A"/>
    <property type="chains" value="a=1-251"/>
</dbReference>
<dbReference type="PDBsum" id="1DVK"/>
<dbReference type="PDBsum" id="5MPS"/>
<dbReference type="PDBsum" id="5MQ0"/>
<dbReference type="PDBsum" id="5WSG"/>
<dbReference type="PDBsum" id="5YLZ"/>
<dbReference type="PDBsum" id="6BK8"/>
<dbReference type="PDBsum" id="6EXN"/>
<dbReference type="PDBsum" id="9DTR"/>
<dbReference type="EMDB" id="EMD-3539"/>
<dbReference type="EMDB" id="EMD-3541"/>
<dbReference type="EMDB" id="EMD-47157"/>
<dbReference type="EMDB" id="EMD-6839"/>
<dbReference type="EMDB" id="EMD-7109"/>
<dbReference type="SMR" id="P33411"/>
<dbReference type="BioGRID" id="33250">
    <property type="interactions" value="431"/>
</dbReference>
<dbReference type="DIP" id="DIP-1110N"/>
<dbReference type="FunCoup" id="P33411">
    <property type="interactions" value="648"/>
</dbReference>
<dbReference type="IntAct" id="P33411">
    <property type="interactions" value="6"/>
</dbReference>
<dbReference type="MINT" id="P33411"/>
<dbReference type="STRING" id="4932.YGR006W"/>
<dbReference type="iPTMnet" id="P33411"/>
<dbReference type="PaxDb" id="4932-YGR006W"/>
<dbReference type="PeptideAtlas" id="P33411"/>
<dbReference type="EnsemblFungi" id="YGR006W_mRNA">
    <property type="protein sequence ID" value="YGR006W"/>
    <property type="gene ID" value="YGR006W"/>
</dbReference>
<dbReference type="GeneID" id="852889"/>
<dbReference type="KEGG" id="sce:YGR006W"/>
<dbReference type="AGR" id="SGD:S000003238"/>
<dbReference type="SGD" id="S000003238">
    <property type="gene designation" value="PRP18"/>
</dbReference>
<dbReference type="VEuPathDB" id="FungiDB:YGR006W"/>
<dbReference type="eggNOG" id="KOG2808">
    <property type="taxonomic scope" value="Eukaryota"/>
</dbReference>
<dbReference type="GeneTree" id="ENSGT00390000015073"/>
<dbReference type="HOGENOM" id="CLU_081028_0_0_1"/>
<dbReference type="InParanoid" id="P33411"/>
<dbReference type="OMA" id="PIGVTQI"/>
<dbReference type="OrthoDB" id="10261918at2759"/>
<dbReference type="BioCyc" id="YEAST:G3O-30737-MONOMER"/>
<dbReference type="BioGRID-ORCS" id="852889">
    <property type="hits" value="2 hits in 10 CRISPR screens"/>
</dbReference>
<dbReference type="EvolutionaryTrace" id="P33411"/>
<dbReference type="PRO" id="PR:P33411"/>
<dbReference type="Proteomes" id="UP000002311">
    <property type="component" value="Chromosome VII"/>
</dbReference>
<dbReference type="RNAct" id="P33411">
    <property type="molecule type" value="protein"/>
</dbReference>
<dbReference type="GO" id="GO:0071021">
    <property type="term" value="C:U2-type post-spliceosomal complex"/>
    <property type="evidence" value="ECO:0000314"/>
    <property type="project" value="SGD"/>
</dbReference>
<dbReference type="GO" id="GO:0046540">
    <property type="term" value="C:U4/U6 x U5 tri-snRNP complex"/>
    <property type="evidence" value="ECO:0000314"/>
    <property type="project" value="SGD"/>
</dbReference>
<dbReference type="GO" id="GO:0005682">
    <property type="term" value="C:U5 snRNP"/>
    <property type="evidence" value="ECO:0000314"/>
    <property type="project" value="SGD"/>
</dbReference>
<dbReference type="GO" id="GO:0000350">
    <property type="term" value="P:generation of catalytic spliceosome for second transesterification step"/>
    <property type="evidence" value="ECO:0000314"/>
    <property type="project" value="SGD"/>
</dbReference>
<dbReference type="GO" id="GO:0000398">
    <property type="term" value="P:mRNA splicing, via spliceosome"/>
    <property type="evidence" value="ECO:0000315"/>
    <property type="project" value="SGD"/>
</dbReference>
<dbReference type="GO" id="GO:0071028">
    <property type="term" value="P:nuclear mRNA surveillance"/>
    <property type="evidence" value="ECO:0000315"/>
    <property type="project" value="SGD"/>
</dbReference>
<dbReference type="DisProt" id="DP02073"/>
<dbReference type="FunFam" id="1.20.940.10:FF:000011">
    <property type="entry name" value="Pre-mRNA-splicing factor 18"/>
    <property type="match status" value="1"/>
</dbReference>
<dbReference type="Gene3D" id="1.20.940.10">
    <property type="entry name" value="Functional domain of the splicing factor Prp18"/>
    <property type="match status" value="1"/>
</dbReference>
<dbReference type="IDEAL" id="IID50314"/>
<dbReference type="InterPro" id="IPR004098">
    <property type="entry name" value="Prp18"/>
</dbReference>
<dbReference type="InterPro" id="IPR039979">
    <property type="entry name" value="PRPF18"/>
</dbReference>
<dbReference type="PANTHER" id="PTHR13007">
    <property type="entry name" value="PRE-MRNA SPLICING FACTOR-RELATED"/>
    <property type="match status" value="1"/>
</dbReference>
<dbReference type="PANTHER" id="PTHR13007:SF19">
    <property type="entry name" value="PRE-MRNA-SPLICING FACTOR 18"/>
    <property type="match status" value="1"/>
</dbReference>
<dbReference type="Pfam" id="PF02840">
    <property type="entry name" value="Prp18"/>
    <property type="match status" value="1"/>
</dbReference>
<dbReference type="SUPFAM" id="SSF47938">
    <property type="entry name" value="Functional domain of the splicing factor Prp18"/>
    <property type="match status" value="1"/>
</dbReference>
<gene>
    <name type="primary">PRP18</name>
    <name type="ordered locus">YGR006W</name>
</gene>
<protein>
    <recommendedName>
        <fullName>Pre-mRNA-splicing factor 18</fullName>
    </recommendedName>
</protein>
<evidence type="ECO:0000256" key="1">
    <source>
        <dbReference type="SAM" id="MobiDB-lite"/>
    </source>
</evidence>
<evidence type="ECO:0000269" key="2">
    <source>
    </source>
</evidence>
<evidence type="ECO:0000305" key="3"/>
<evidence type="ECO:0007829" key="4">
    <source>
        <dbReference type="PDB" id="1DVK"/>
    </source>
</evidence>
<evidence type="ECO:0007829" key="5">
    <source>
        <dbReference type="PDB" id="9DTR"/>
    </source>
</evidence>
<keyword id="KW-0002">3D-structure</keyword>
<keyword id="KW-0507">mRNA processing</keyword>
<keyword id="KW-0508">mRNA splicing</keyword>
<keyword id="KW-0539">Nucleus</keyword>
<keyword id="KW-1185">Reference proteome</keyword>
<keyword id="KW-0747">Spliceosome</keyword>
<accession>P33411</accession>
<accession>D6VUE3</accession>
<accession>Q02459</accession>
<accession>Q05724</accession>
<reference key="1">
    <citation type="journal article" date="1993" name="Mol. Cell. Biol.">
        <title>A U5 small nuclear ribonucleoprotein particle protein involved only in the second step of pre-mRNA splicing in Saccharomyces cerevisiae.</title>
        <authorList>
            <person name="Horowitz D.S."/>
            <person name="Abelson J.N."/>
        </authorList>
    </citation>
    <scope>NUCLEOTIDE SEQUENCE [GENOMIC DNA]</scope>
</reference>
<reference key="2">
    <citation type="journal article" date="1994" name="Genes Dev.">
        <title>TFIIF-TAF-RNA polymerase II connection.</title>
        <authorList>
            <person name="Henry N.L."/>
            <person name="Campbell A.M."/>
            <person name="Feaver W.J."/>
            <person name="Poon D."/>
            <person name="Weil P.A."/>
            <person name="Kornberg R.D."/>
        </authorList>
    </citation>
    <scope>NUCLEOTIDE SEQUENCE [GENOMIC DNA]</scope>
    <source>
        <strain>ATCC 208279 / BJ926</strain>
    </source>
</reference>
<reference key="3">
    <citation type="journal article" date="1997" name="Nature">
        <title>The nucleotide sequence of Saccharomyces cerevisiae chromosome VII.</title>
        <authorList>
            <person name="Tettelin H."/>
            <person name="Agostoni-Carbone M.L."/>
            <person name="Albermann K."/>
            <person name="Albers M."/>
            <person name="Arroyo J."/>
            <person name="Backes U."/>
            <person name="Barreiros T."/>
            <person name="Bertani I."/>
            <person name="Bjourson A.J."/>
            <person name="Brueckner M."/>
            <person name="Bruschi C.V."/>
            <person name="Carignani G."/>
            <person name="Castagnoli L."/>
            <person name="Cerdan E."/>
            <person name="Clemente M.L."/>
            <person name="Coblenz A."/>
            <person name="Coglievina M."/>
            <person name="Coissac E."/>
            <person name="Defoor E."/>
            <person name="Del Bino S."/>
            <person name="Delius H."/>
            <person name="Delneri D."/>
            <person name="de Wergifosse P."/>
            <person name="Dujon B."/>
            <person name="Durand P."/>
            <person name="Entian K.-D."/>
            <person name="Eraso P."/>
            <person name="Escribano V."/>
            <person name="Fabiani L."/>
            <person name="Fartmann B."/>
            <person name="Feroli F."/>
            <person name="Feuermann M."/>
            <person name="Frontali L."/>
            <person name="Garcia-Gonzalez M."/>
            <person name="Garcia-Saez M.I."/>
            <person name="Goffeau A."/>
            <person name="Guerreiro P."/>
            <person name="Hani J."/>
            <person name="Hansen M."/>
            <person name="Hebling U."/>
            <person name="Hernandez K."/>
            <person name="Heumann K."/>
            <person name="Hilger F."/>
            <person name="Hofmann B."/>
            <person name="Indge K.J."/>
            <person name="James C.M."/>
            <person name="Klima R."/>
            <person name="Koetter P."/>
            <person name="Kramer B."/>
            <person name="Kramer W."/>
            <person name="Lauquin G."/>
            <person name="Leuther H."/>
            <person name="Louis E.J."/>
            <person name="Maillier E."/>
            <person name="Marconi A."/>
            <person name="Martegani E."/>
            <person name="Mazon M.J."/>
            <person name="Mazzoni C."/>
            <person name="McReynolds A.D.K."/>
            <person name="Melchioretto P."/>
            <person name="Mewes H.-W."/>
            <person name="Minenkova O."/>
            <person name="Mueller-Auer S."/>
            <person name="Nawrocki A."/>
            <person name="Netter P."/>
            <person name="Neu R."/>
            <person name="Nombela C."/>
            <person name="Oliver S.G."/>
            <person name="Panzeri L."/>
            <person name="Paoluzi S."/>
            <person name="Plevani P."/>
            <person name="Portetelle D."/>
            <person name="Portillo F."/>
            <person name="Potier S."/>
            <person name="Purnelle B."/>
            <person name="Rieger M."/>
            <person name="Riles L."/>
            <person name="Rinaldi T."/>
            <person name="Robben J."/>
            <person name="Rodrigues-Pousada C."/>
            <person name="Rodriguez-Belmonte E."/>
            <person name="Rodriguez-Torres A.M."/>
            <person name="Rose M."/>
            <person name="Ruzzi M."/>
            <person name="Saliola M."/>
            <person name="Sanchez-Perez M."/>
            <person name="Schaefer B."/>
            <person name="Schaefer M."/>
            <person name="Scharfe M."/>
            <person name="Schmidheini T."/>
            <person name="Schreer A."/>
            <person name="Skala J."/>
            <person name="Souciet J.-L."/>
            <person name="Steensma H.Y."/>
            <person name="Talla E."/>
            <person name="Thierry A."/>
            <person name="Vandenbol M."/>
            <person name="van der Aart Q.J.M."/>
            <person name="Van Dyck L."/>
            <person name="Vanoni M."/>
            <person name="Verhasselt P."/>
            <person name="Voet M."/>
            <person name="Volckaert G."/>
            <person name="Wambutt R."/>
            <person name="Watson M.D."/>
            <person name="Weber N."/>
            <person name="Wedler E."/>
            <person name="Wedler H."/>
            <person name="Wipfli P."/>
            <person name="Wolf K."/>
            <person name="Wright L.F."/>
            <person name="Zaccaria P."/>
            <person name="Zimmermann M."/>
            <person name="Zollner A."/>
            <person name="Kleine K."/>
        </authorList>
    </citation>
    <scope>NUCLEOTIDE SEQUENCE [LARGE SCALE GENOMIC DNA]</scope>
    <source>
        <strain>ATCC 204508 / S288c</strain>
    </source>
</reference>
<reference key="4">
    <citation type="journal article" date="2014" name="G3 (Bethesda)">
        <title>The reference genome sequence of Saccharomyces cerevisiae: Then and now.</title>
        <authorList>
            <person name="Engel S.R."/>
            <person name="Dietrich F.S."/>
            <person name="Fisk D.G."/>
            <person name="Binkley G."/>
            <person name="Balakrishnan R."/>
            <person name="Costanzo M.C."/>
            <person name="Dwight S.S."/>
            <person name="Hitz B.C."/>
            <person name="Karra K."/>
            <person name="Nash R.S."/>
            <person name="Weng S."/>
            <person name="Wong E.D."/>
            <person name="Lloyd P."/>
            <person name="Skrzypek M.S."/>
            <person name="Miyasato S.R."/>
            <person name="Simison M."/>
            <person name="Cherry J.M."/>
        </authorList>
    </citation>
    <scope>GENOME REANNOTATION</scope>
    <source>
        <strain>ATCC 204508 / S288c</strain>
    </source>
</reference>
<reference key="5">
    <citation type="journal article" date="1996" name="J. Biochem.">
        <title>Isolation and characterization of ECT1 gene encoding CTP: phosphoethanolamine cytidylyltransferase of Saccharomyces cerevisiae.</title>
        <authorList>
            <person name="Min-Seok R."/>
            <person name="Kawamata Y."/>
            <person name="Nakamura H."/>
            <person name="Ohta A."/>
            <person name="Takagi M."/>
        </authorList>
    </citation>
    <scope>NUCLEOTIDE SEQUENCE [GENOMIC DNA] OF 130-251</scope>
    <source>
        <strain>S288c / GRF88</strain>
    </source>
</reference>
<reference key="6">
    <citation type="journal article" date="1999" name="EMBO J.">
        <title>Identification by mass spectrometry and functional analysis of novel proteins of the yeast [U4/U6.U5] tri-snRNP.</title>
        <authorList>
            <person name="Gottschalk A."/>
            <person name="Neubauer G."/>
            <person name="Banroques J."/>
            <person name="Mann M."/>
            <person name="Luehrmann R."/>
            <person name="Fabrizio P."/>
        </authorList>
    </citation>
    <scope>SUBUNIT</scope>
    <scope>IDENTIFICATION IN THE U4/U5/U6 TRI-SNRNP COMPLEX</scope>
    <scope>IDENTIFICATION BY MASS SPECTROMETRY</scope>
</reference>
<reference key="7">
    <citation type="journal article" date="2000" name="Proc. Natl. Acad. Sci. U.S.A.">
        <title>Crystal structure of the functional domain of the splicing factor Prp18.</title>
        <authorList>
            <person name="Jiang J."/>
            <person name="Horowitz D.S."/>
            <person name="Xu R.-M."/>
        </authorList>
    </citation>
    <scope>X-RAY CRYSTALLOGRAPHY (2.15 ANGSTROMS) OF 79-251</scope>
</reference>
<feature type="chain" id="PRO_0000058586" description="Pre-mRNA-splicing factor 18">
    <location>
        <begin position="1"/>
        <end position="251"/>
    </location>
</feature>
<feature type="region of interest" description="Disordered" evidence="1">
    <location>
        <begin position="17"/>
        <end position="67"/>
    </location>
</feature>
<feature type="sequence conflict" description="In Ref. 2; AAA61643." evidence="3" ref="2">
    <original>PIGVTSVGIHARSAHSKIQGGRNAANIMIDERTRLWITSIKRLITFEEWYTSNHDS</original>
    <variation>LLVL</variation>
    <location>
        <begin position="194"/>
        <end position="249"/>
    </location>
</feature>
<feature type="sequence conflict" description="In Ref. 3." evidence="3" ref="3">
    <original>GIHARSAHSKIQGGRNAANIMIDERTRLWITSIKRLITFEEWYTSNHDSLA</original>
    <variation>AFMLVVHIRKFKEAGMLLT</variation>
    <location>
        <begin position="201"/>
        <end position="251"/>
    </location>
</feature>
<feature type="helix" evidence="4">
    <location>
        <begin position="82"/>
        <end position="85"/>
    </location>
</feature>
<feature type="helix" evidence="5">
    <location>
        <begin position="88"/>
        <end position="90"/>
    </location>
</feature>
<feature type="helix" evidence="4">
    <location>
        <begin position="97"/>
        <end position="99"/>
    </location>
</feature>
<feature type="turn" evidence="5">
    <location>
        <begin position="103"/>
        <end position="105"/>
    </location>
</feature>
<feature type="helix" evidence="4">
    <location>
        <begin position="106"/>
        <end position="126"/>
    </location>
</feature>
<feature type="helix" evidence="4">
    <location>
        <begin position="127"/>
        <end position="130"/>
    </location>
</feature>
<feature type="turn" evidence="4">
    <location>
        <begin position="133"/>
        <end position="135"/>
    </location>
</feature>
<feature type="helix" evidence="4">
    <location>
        <begin position="136"/>
        <end position="152"/>
    </location>
</feature>
<feature type="helix" evidence="4">
    <location>
        <begin position="157"/>
        <end position="170"/>
    </location>
</feature>
<feature type="helix" evidence="4">
    <location>
        <begin position="173"/>
        <end position="175"/>
    </location>
</feature>
<feature type="helix" evidence="4">
    <location>
        <begin position="176"/>
        <end position="187"/>
    </location>
</feature>
<feature type="turn" evidence="5">
    <location>
        <begin position="188"/>
        <end position="190"/>
    </location>
</feature>
<feature type="strand" evidence="5">
    <location>
        <begin position="201"/>
        <end position="203"/>
    </location>
</feature>
<feature type="helix" evidence="5">
    <location>
        <begin position="206"/>
        <end position="212"/>
    </location>
</feature>
<feature type="helix" evidence="5">
    <location>
        <begin position="214"/>
        <end position="216"/>
    </location>
</feature>
<feature type="helix" evidence="5">
    <location>
        <begin position="219"/>
        <end position="221"/>
    </location>
</feature>
<feature type="helix" evidence="4">
    <location>
        <begin position="224"/>
        <end position="245"/>
    </location>
</feature>
<name>PRP18_YEAST</name>
<organism>
    <name type="scientific">Saccharomyces cerevisiae (strain ATCC 204508 / S288c)</name>
    <name type="common">Baker's yeast</name>
    <dbReference type="NCBI Taxonomy" id="559292"/>
    <lineage>
        <taxon>Eukaryota</taxon>
        <taxon>Fungi</taxon>
        <taxon>Dikarya</taxon>
        <taxon>Ascomycota</taxon>
        <taxon>Saccharomycotina</taxon>
        <taxon>Saccharomycetes</taxon>
        <taxon>Saccharomycetales</taxon>
        <taxon>Saccharomycetaceae</taxon>
        <taxon>Saccharomyces</taxon>
    </lineage>
</organism>
<sequence>MDLDLASILKGEISKKKKELANSKGVQPPCTEKFQPHESANIDETPRQVEQESTDEENLSDNQSDDIRTTISKLENRPERIQEAIAQDKTISVIIDPSQIGSTEGKPLLSMKCNLYIHEILSRWKASLEAYHPELFLDTKKALFPLLLQLRRNQLAPDLLISLATVLYHLQQPKEINLAVQSYMKLSIGNVAWPIGVTSVGIHARSAHSKIQGGRNAANIMIDERTRLWITSIKRLITFEEWYTSNHDSLA</sequence>